<name>GR59E_DROME</name>
<sequence>MDSSYWENLLLTINRFLGVYPSGRVGVLRWLHTLWSLFLLMYIWTGSIVKCLEFTVEIPTIEKLLYLMEFPGNMATIAILVYYAVLNRPLAHGAELQIERIITGLKGKAKRLVYKRHGQRTLHLMATTLVFHGLCVLVDVVNYDFEFWTTWSSNSVYNLPGLMMSLGVLQYAQPVHFLWLVMDQMRMCLKELKLLQRPPQGSTKLDACYESAFAVLVDAGGGSALMIEEMRYTCNLIEQVHSQFLLRFGLYLVLNLLNSLVSICVELYLIFNFFETPLWEESVLLVYRLLWLAMHGGRIWFILSVNEQILEQKCNLCQLLNELEVCSSRLQRTINRFLLQLQRSIDQPLEACGIVTLDTRSLGGFIGVLMAIVIFLIQIGLGNKSLMGVALNRSNWVYV</sequence>
<comment type="function">
    <text evidence="1">Probable gustatory receptor which mediates acceptance or avoidance behavior, depending on its substrates.</text>
</comment>
<comment type="subcellular location">
    <subcellularLocation>
        <location evidence="1">Cell membrane</location>
        <topology evidence="1">Multi-pass membrane protein</topology>
    </subcellularLocation>
</comment>
<comment type="tissue specificity">
    <text evidence="3 4">Expressed in the adult labellar chemosensory neurons. In larvae, is expressed in neurons of the terminal external chemosensory organ.</text>
</comment>
<comment type="similarity">
    <text evidence="5">Belongs to the insect chemoreceptor superfamily. Gustatory receptor (GR) family. Gr10a subfamily.</text>
</comment>
<accession>Q9W1N6</accession>
<feature type="chain" id="PRO_0000216524" description="Putative gustatory receptor 59e">
    <location>
        <begin position="1"/>
        <end position="399"/>
    </location>
</feature>
<feature type="topological domain" description="Cytoplasmic" evidence="1">
    <location>
        <begin position="1"/>
        <end position="33"/>
    </location>
</feature>
<feature type="transmembrane region" description="Helical; Name=1" evidence="2">
    <location>
        <begin position="34"/>
        <end position="54"/>
    </location>
</feature>
<feature type="topological domain" description="Extracellular" evidence="1">
    <location>
        <begin position="55"/>
        <end position="65"/>
    </location>
</feature>
<feature type="transmembrane region" description="Helical; Name=2" evidence="2">
    <location>
        <begin position="66"/>
        <end position="86"/>
    </location>
</feature>
<feature type="topological domain" description="Cytoplasmic" evidence="1">
    <location>
        <begin position="87"/>
        <end position="120"/>
    </location>
</feature>
<feature type="transmembrane region" description="Helical; Name=3" evidence="2">
    <location>
        <begin position="121"/>
        <end position="141"/>
    </location>
</feature>
<feature type="topological domain" description="Extracellular" evidence="1">
    <location>
        <begin position="142"/>
        <end position="206"/>
    </location>
</feature>
<feature type="transmembrane region" description="Helical; Name=4" evidence="2">
    <location>
        <begin position="207"/>
        <end position="227"/>
    </location>
</feature>
<feature type="topological domain" description="Cytoplasmic" evidence="1">
    <location>
        <begin position="228"/>
        <end position="250"/>
    </location>
</feature>
<feature type="transmembrane region" description="Helical; Name=5" evidence="2">
    <location>
        <begin position="251"/>
        <end position="271"/>
    </location>
</feature>
<feature type="topological domain" description="Extracellular" evidence="1">
    <location>
        <begin position="272"/>
        <end position="282"/>
    </location>
</feature>
<feature type="transmembrane region" description="Helical; Name=6" evidence="2">
    <location>
        <begin position="283"/>
        <end position="303"/>
    </location>
</feature>
<feature type="topological domain" description="Cytoplasmic" evidence="1">
    <location>
        <begin position="304"/>
        <end position="361"/>
    </location>
</feature>
<feature type="transmembrane region" description="Helical; Name=7" evidence="2">
    <location>
        <begin position="362"/>
        <end position="382"/>
    </location>
</feature>
<feature type="topological domain" description="Extracellular" evidence="1">
    <location>
        <begin position="383"/>
        <end position="399"/>
    </location>
</feature>
<feature type="glycosylation site" description="N-linked (GlcNAc...) asparagine" evidence="2">
    <location>
        <position position="383"/>
    </location>
</feature>
<feature type="glycosylation site" description="N-linked (GlcNAc...) asparagine" evidence="2">
    <location>
        <position position="392"/>
    </location>
</feature>
<gene>
    <name type="primary">Gr59e</name>
    <name type="synonym">GR59E.2</name>
    <name type="ORF">CG33151</name>
</gene>
<keyword id="KW-1003">Cell membrane</keyword>
<keyword id="KW-0325">Glycoprotein</keyword>
<keyword id="KW-0472">Membrane</keyword>
<keyword id="KW-0675">Receptor</keyword>
<keyword id="KW-1185">Reference proteome</keyword>
<keyword id="KW-0807">Transducer</keyword>
<keyword id="KW-0812">Transmembrane</keyword>
<keyword id="KW-1133">Transmembrane helix</keyword>
<dbReference type="EMBL" id="AE013599">
    <property type="protein sequence ID" value="AAF47021.2"/>
    <property type="molecule type" value="Genomic_DNA"/>
</dbReference>
<dbReference type="RefSeq" id="NP_788431.1">
    <property type="nucleotide sequence ID" value="NM_176251.1"/>
</dbReference>
<dbReference type="SMR" id="Q9W1N6"/>
<dbReference type="BioGRID" id="63325">
    <property type="interactions" value="1"/>
</dbReference>
<dbReference type="FunCoup" id="Q9W1N6">
    <property type="interactions" value="9"/>
</dbReference>
<dbReference type="IntAct" id="Q9W1N6">
    <property type="interactions" value="3"/>
</dbReference>
<dbReference type="STRING" id="7227.FBpp0072024"/>
<dbReference type="GlyCosmos" id="Q9W1N6">
    <property type="glycosylation" value="2 sites, No reported glycans"/>
</dbReference>
<dbReference type="GlyGen" id="Q9W1N6">
    <property type="glycosylation" value="2 sites"/>
</dbReference>
<dbReference type="PaxDb" id="7227-FBpp0072024"/>
<dbReference type="DNASU" id="37725"/>
<dbReference type="EnsemblMetazoa" id="FBtr0072115">
    <property type="protein sequence ID" value="FBpp0072024"/>
    <property type="gene ID" value="FBgn0041233"/>
</dbReference>
<dbReference type="GeneID" id="37725"/>
<dbReference type="KEGG" id="dme:Dmel_CG33151"/>
<dbReference type="AGR" id="FB:FBgn0041233"/>
<dbReference type="CTD" id="37725"/>
<dbReference type="FlyBase" id="FBgn0041233">
    <property type="gene designation" value="Gr59e"/>
</dbReference>
<dbReference type="VEuPathDB" id="VectorBase:FBgn0041233"/>
<dbReference type="eggNOG" id="KOG4294">
    <property type="taxonomic scope" value="Eukaryota"/>
</dbReference>
<dbReference type="HOGENOM" id="CLU_682010_0_0_1"/>
<dbReference type="InParanoid" id="Q9W1N6"/>
<dbReference type="OMA" id="CGSHLER"/>
<dbReference type="OrthoDB" id="7883700at2759"/>
<dbReference type="PhylomeDB" id="Q9W1N6"/>
<dbReference type="SignaLink" id="Q9W1N6"/>
<dbReference type="BioGRID-ORCS" id="37725">
    <property type="hits" value="0 hits in 1 CRISPR screen"/>
</dbReference>
<dbReference type="ChiTaRS" id="Gr59e">
    <property type="organism name" value="fly"/>
</dbReference>
<dbReference type="GenomeRNAi" id="37725"/>
<dbReference type="PRO" id="PR:Q9W1N6"/>
<dbReference type="Proteomes" id="UP000000803">
    <property type="component" value="Chromosome 2R"/>
</dbReference>
<dbReference type="Bgee" id="FBgn0041233">
    <property type="expression patterns" value="Expressed in visual pigment cell (sensu Nematoda and Protostomia) in testis and 2 other cell types or tissues"/>
</dbReference>
<dbReference type="ExpressionAtlas" id="Q9W1N6">
    <property type="expression patterns" value="baseline and differential"/>
</dbReference>
<dbReference type="GO" id="GO:0030424">
    <property type="term" value="C:axon"/>
    <property type="evidence" value="ECO:0000318"/>
    <property type="project" value="GO_Central"/>
</dbReference>
<dbReference type="GO" id="GO:0030425">
    <property type="term" value="C:dendrite"/>
    <property type="evidence" value="ECO:0000318"/>
    <property type="project" value="GO_Central"/>
</dbReference>
<dbReference type="GO" id="GO:0016020">
    <property type="term" value="C:membrane"/>
    <property type="evidence" value="ECO:0000303"/>
    <property type="project" value="UniProtKB"/>
</dbReference>
<dbReference type="GO" id="GO:0043025">
    <property type="term" value="C:neuronal cell body"/>
    <property type="evidence" value="ECO:0000318"/>
    <property type="project" value="GO_Central"/>
</dbReference>
<dbReference type="GO" id="GO:0005886">
    <property type="term" value="C:plasma membrane"/>
    <property type="evidence" value="ECO:0000250"/>
    <property type="project" value="FlyBase"/>
</dbReference>
<dbReference type="GO" id="GO:0015276">
    <property type="term" value="F:ligand-gated monoatomic ion channel activity"/>
    <property type="evidence" value="ECO:0000250"/>
    <property type="project" value="FlyBase"/>
</dbReference>
<dbReference type="GO" id="GO:0008527">
    <property type="term" value="F:taste receptor activity"/>
    <property type="evidence" value="ECO:0000303"/>
    <property type="project" value="UniProtKB"/>
</dbReference>
<dbReference type="GO" id="GO:0007635">
    <property type="term" value="P:chemosensory behavior"/>
    <property type="evidence" value="ECO:0000318"/>
    <property type="project" value="GO_Central"/>
</dbReference>
<dbReference type="GO" id="GO:0050912">
    <property type="term" value="P:detection of chemical stimulus involved in sensory perception of taste"/>
    <property type="evidence" value="ECO:0000303"/>
    <property type="project" value="UniProtKB"/>
</dbReference>
<dbReference type="GO" id="GO:0008049">
    <property type="term" value="P:male courtship behavior"/>
    <property type="evidence" value="ECO:0000318"/>
    <property type="project" value="GO_Central"/>
</dbReference>
<dbReference type="GO" id="GO:0034220">
    <property type="term" value="P:monoatomic ion transmembrane transport"/>
    <property type="evidence" value="ECO:0000250"/>
    <property type="project" value="FlyBase"/>
</dbReference>
<dbReference type="GO" id="GO:0007165">
    <property type="term" value="P:signal transduction"/>
    <property type="evidence" value="ECO:0007669"/>
    <property type="project" value="UniProtKB-KW"/>
</dbReference>
<dbReference type="InterPro" id="IPR013604">
    <property type="entry name" value="7TM_chemorcpt"/>
</dbReference>
<dbReference type="Pfam" id="PF08395">
    <property type="entry name" value="7tm_7"/>
    <property type="match status" value="1"/>
</dbReference>
<dbReference type="PROSITE" id="PS00237">
    <property type="entry name" value="G_PROTEIN_RECEP_F1_1"/>
    <property type="match status" value="2"/>
</dbReference>
<reference key="1">
    <citation type="journal article" date="2000" name="Science">
        <title>The genome sequence of Drosophila melanogaster.</title>
        <authorList>
            <person name="Adams M.D."/>
            <person name="Celniker S.E."/>
            <person name="Holt R.A."/>
            <person name="Evans C.A."/>
            <person name="Gocayne J.D."/>
            <person name="Amanatides P.G."/>
            <person name="Scherer S.E."/>
            <person name="Li P.W."/>
            <person name="Hoskins R.A."/>
            <person name="Galle R.F."/>
            <person name="George R.A."/>
            <person name="Lewis S.E."/>
            <person name="Richards S."/>
            <person name="Ashburner M."/>
            <person name="Henderson S.N."/>
            <person name="Sutton G.G."/>
            <person name="Wortman J.R."/>
            <person name="Yandell M.D."/>
            <person name="Zhang Q."/>
            <person name="Chen L.X."/>
            <person name="Brandon R.C."/>
            <person name="Rogers Y.-H.C."/>
            <person name="Blazej R.G."/>
            <person name="Champe M."/>
            <person name="Pfeiffer B.D."/>
            <person name="Wan K.H."/>
            <person name="Doyle C."/>
            <person name="Baxter E.G."/>
            <person name="Helt G."/>
            <person name="Nelson C.R."/>
            <person name="Miklos G.L.G."/>
            <person name="Abril J.F."/>
            <person name="Agbayani A."/>
            <person name="An H.-J."/>
            <person name="Andrews-Pfannkoch C."/>
            <person name="Baldwin D."/>
            <person name="Ballew R.M."/>
            <person name="Basu A."/>
            <person name="Baxendale J."/>
            <person name="Bayraktaroglu L."/>
            <person name="Beasley E.M."/>
            <person name="Beeson K.Y."/>
            <person name="Benos P.V."/>
            <person name="Berman B.P."/>
            <person name="Bhandari D."/>
            <person name="Bolshakov S."/>
            <person name="Borkova D."/>
            <person name="Botchan M.R."/>
            <person name="Bouck J."/>
            <person name="Brokstein P."/>
            <person name="Brottier P."/>
            <person name="Burtis K.C."/>
            <person name="Busam D.A."/>
            <person name="Butler H."/>
            <person name="Cadieu E."/>
            <person name="Center A."/>
            <person name="Chandra I."/>
            <person name="Cherry J.M."/>
            <person name="Cawley S."/>
            <person name="Dahlke C."/>
            <person name="Davenport L.B."/>
            <person name="Davies P."/>
            <person name="de Pablos B."/>
            <person name="Delcher A."/>
            <person name="Deng Z."/>
            <person name="Mays A.D."/>
            <person name="Dew I."/>
            <person name="Dietz S.M."/>
            <person name="Dodson K."/>
            <person name="Doup L.E."/>
            <person name="Downes M."/>
            <person name="Dugan-Rocha S."/>
            <person name="Dunkov B.C."/>
            <person name="Dunn P."/>
            <person name="Durbin K.J."/>
            <person name="Evangelista C.C."/>
            <person name="Ferraz C."/>
            <person name="Ferriera S."/>
            <person name="Fleischmann W."/>
            <person name="Fosler C."/>
            <person name="Gabrielian A.E."/>
            <person name="Garg N.S."/>
            <person name="Gelbart W.M."/>
            <person name="Glasser K."/>
            <person name="Glodek A."/>
            <person name="Gong F."/>
            <person name="Gorrell J.H."/>
            <person name="Gu Z."/>
            <person name="Guan P."/>
            <person name="Harris M."/>
            <person name="Harris N.L."/>
            <person name="Harvey D.A."/>
            <person name="Heiman T.J."/>
            <person name="Hernandez J.R."/>
            <person name="Houck J."/>
            <person name="Hostin D."/>
            <person name="Houston K.A."/>
            <person name="Howland T.J."/>
            <person name="Wei M.-H."/>
            <person name="Ibegwam C."/>
            <person name="Jalali M."/>
            <person name="Kalush F."/>
            <person name="Karpen G.H."/>
            <person name="Ke Z."/>
            <person name="Kennison J.A."/>
            <person name="Ketchum K.A."/>
            <person name="Kimmel B.E."/>
            <person name="Kodira C.D."/>
            <person name="Kraft C.L."/>
            <person name="Kravitz S."/>
            <person name="Kulp D."/>
            <person name="Lai Z."/>
            <person name="Lasko P."/>
            <person name="Lei Y."/>
            <person name="Levitsky A.A."/>
            <person name="Li J.H."/>
            <person name="Li Z."/>
            <person name="Liang Y."/>
            <person name="Lin X."/>
            <person name="Liu X."/>
            <person name="Mattei B."/>
            <person name="McIntosh T.C."/>
            <person name="McLeod M.P."/>
            <person name="McPherson D."/>
            <person name="Merkulov G."/>
            <person name="Milshina N.V."/>
            <person name="Mobarry C."/>
            <person name="Morris J."/>
            <person name="Moshrefi A."/>
            <person name="Mount S.M."/>
            <person name="Moy M."/>
            <person name="Murphy B."/>
            <person name="Murphy L."/>
            <person name="Muzny D.M."/>
            <person name="Nelson D.L."/>
            <person name="Nelson D.R."/>
            <person name="Nelson K.A."/>
            <person name="Nixon K."/>
            <person name="Nusskern D.R."/>
            <person name="Pacleb J.M."/>
            <person name="Palazzolo M."/>
            <person name="Pittman G.S."/>
            <person name="Pan S."/>
            <person name="Pollard J."/>
            <person name="Puri V."/>
            <person name="Reese M.G."/>
            <person name="Reinert K."/>
            <person name="Remington K."/>
            <person name="Saunders R.D.C."/>
            <person name="Scheeler F."/>
            <person name="Shen H."/>
            <person name="Shue B.C."/>
            <person name="Siden-Kiamos I."/>
            <person name="Simpson M."/>
            <person name="Skupski M.P."/>
            <person name="Smith T.J."/>
            <person name="Spier E."/>
            <person name="Spradling A.C."/>
            <person name="Stapleton M."/>
            <person name="Strong R."/>
            <person name="Sun E."/>
            <person name="Svirskas R."/>
            <person name="Tector C."/>
            <person name="Turner R."/>
            <person name="Venter E."/>
            <person name="Wang A.H."/>
            <person name="Wang X."/>
            <person name="Wang Z.-Y."/>
            <person name="Wassarman D.A."/>
            <person name="Weinstock G.M."/>
            <person name="Weissenbach J."/>
            <person name="Williams S.M."/>
            <person name="Woodage T."/>
            <person name="Worley K.C."/>
            <person name="Wu D."/>
            <person name="Yang S."/>
            <person name="Yao Q.A."/>
            <person name="Ye J."/>
            <person name="Yeh R.-F."/>
            <person name="Zaveri J.S."/>
            <person name="Zhan M."/>
            <person name="Zhang G."/>
            <person name="Zhao Q."/>
            <person name="Zheng L."/>
            <person name="Zheng X.H."/>
            <person name="Zhong F.N."/>
            <person name="Zhong W."/>
            <person name="Zhou X."/>
            <person name="Zhu S.C."/>
            <person name="Zhu X."/>
            <person name="Smith H.O."/>
            <person name="Gibbs R.A."/>
            <person name="Myers E.W."/>
            <person name="Rubin G.M."/>
            <person name="Venter J.C."/>
        </authorList>
    </citation>
    <scope>NUCLEOTIDE SEQUENCE [LARGE SCALE GENOMIC DNA]</scope>
    <source>
        <strain>Berkeley</strain>
    </source>
</reference>
<reference key="2">
    <citation type="journal article" date="2002" name="Genome Biol.">
        <title>Annotation of the Drosophila melanogaster euchromatic genome: a systematic review.</title>
        <authorList>
            <person name="Misra S."/>
            <person name="Crosby M.A."/>
            <person name="Mungall C.J."/>
            <person name="Matthews B.B."/>
            <person name="Campbell K.S."/>
            <person name="Hradecky P."/>
            <person name="Huang Y."/>
            <person name="Kaminker J.S."/>
            <person name="Millburn G.H."/>
            <person name="Prochnik S.E."/>
            <person name="Smith C.D."/>
            <person name="Tupy J.L."/>
            <person name="Whitfield E.J."/>
            <person name="Bayraktaroglu L."/>
            <person name="Berman B.P."/>
            <person name="Bettencourt B.R."/>
            <person name="Celniker S.E."/>
            <person name="de Grey A.D.N.J."/>
            <person name="Drysdale R.A."/>
            <person name="Harris N.L."/>
            <person name="Richter J."/>
            <person name="Russo S."/>
            <person name="Schroeder A.J."/>
            <person name="Shu S.Q."/>
            <person name="Stapleton M."/>
            <person name="Yamada C."/>
            <person name="Ashburner M."/>
            <person name="Gelbart W.M."/>
            <person name="Rubin G.M."/>
            <person name="Lewis S.E."/>
        </authorList>
    </citation>
    <scope>GENOME REANNOTATION</scope>
    <source>
        <strain>Berkeley</strain>
    </source>
</reference>
<reference key="3">
    <citation type="journal article" date="2000" name="Science">
        <title>Candidate taste receptors in Drosophila.</title>
        <authorList>
            <person name="Clyne P.J."/>
            <person name="Warr C.G."/>
            <person name="Carlson J.R."/>
        </authorList>
    </citation>
    <scope>IDENTIFICATION</scope>
    <scope>TISSUE SPECIFICITY</scope>
</reference>
<reference key="4">
    <citation type="journal article" date="2001" name="Curr. Biol.">
        <title>Spatially restricted expression of candidate taste receptors in the Drosophila gustatory system.</title>
        <authorList>
            <person name="Dunipace L."/>
            <person name="Meister S."/>
            <person name="McNealy C."/>
            <person name="Amrein H."/>
        </authorList>
    </citation>
    <scope>IDENTIFICATION</scope>
</reference>
<reference key="5">
    <citation type="journal article" date="2011" name="J. Neurosci.">
        <title>Molecular and cellular organization of the taste system in the Drosophila larva.</title>
        <authorList>
            <person name="Kwon J.Y."/>
            <person name="Dahanukar A."/>
            <person name="Weiss L.A."/>
            <person name="Carlson J.R."/>
        </authorList>
    </citation>
    <scope>TISSUE SPECIFICITY</scope>
</reference>
<protein>
    <recommendedName>
        <fullName>Putative gustatory receptor 59e</fullName>
    </recommendedName>
</protein>
<organism>
    <name type="scientific">Drosophila melanogaster</name>
    <name type="common">Fruit fly</name>
    <dbReference type="NCBI Taxonomy" id="7227"/>
    <lineage>
        <taxon>Eukaryota</taxon>
        <taxon>Metazoa</taxon>
        <taxon>Ecdysozoa</taxon>
        <taxon>Arthropoda</taxon>
        <taxon>Hexapoda</taxon>
        <taxon>Insecta</taxon>
        <taxon>Pterygota</taxon>
        <taxon>Neoptera</taxon>
        <taxon>Endopterygota</taxon>
        <taxon>Diptera</taxon>
        <taxon>Brachycera</taxon>
        <taxon>Muscomorpha</taxon>
        <taxon>Ephydroidea</taxon>
        <taxon>Drosophilidae</taxon>
        <taxon>Drosophila</taxon>
        <taxon>Sophophora</taxon>
    </lineage>
</organism>
<proteinExistence type="evidence at transcript level"/>
<evidence type="ECO:0000250" key="1"/>
<evidence type="ECO:0000255" key="2"/>
<evidence type="ECO:0000269" key="3">
    <source>
    </source>
</evidence>
<evidence type="ECO:0000269" key="4">
    <source>
    </source>
</evidence>
<evidence type="ECO:0000305" key="5"/>